<name>MRAY_AFIC5</name>
<sequence>MFYWLTELAGTIPGINVFRYITFRTGGAMVTGALFVFLFGPWIIDHLRLAQGKGQPIRADGPPTHLMTKKGTPTMGGLMILSGLVVSTLLWANLHNPYVWVVLMVTLGFGFVGFYDDYLKVTKQTHAGFSGRLRLAVEGLIALFACLVIIWAGRDSSVMHLGIPFAKDFAINLGWFYLVFGAFIIVGAGNAVNLTDGLDGLAIVPVMIAAASFGMIAYLVGNAVFSEYLQIRYVAGTGELAVLCGAVLGAGLGFLWFNAPPASIFMGDTGSLALGGMIGSIAVAVKHEIVLAVIGGLFVFEALSVIVQVASFKLTGKRIFRMAPIHHHYEQKGWTEPQIVIRFWIIAVMLALAGLSTLKLR</sequence>
<reference key="1">
    <citation type="journal article" date="2008" name="J. Bacteriol.">
        <title>Genome sequence of the chemolithoautotrophic bacterium Oligotropha carboxidovorans OM5T.</title>
        <authorList>
            <person name="Paul D."/>
            <person name="Bridges S."/>
            <person name="Burgess S.C."/>
            <person name="Dandass Y."/>
            <person name="Lawrence M.L."/>
        </authorList>
    </citation>
    <scope>NUCLEOTIDE SEQUENCE [LARGE SCALE GENOMIC DNA]</scope>
    <source>
        <strain>ATCC 49405 / DSM 1227 / KCTC 32145 / OM5</strain>
    </source>
</reference>
<reference key="2">
    <citation type="journal article" date="2011" name="J. Bacteriol.">
        <title>Complete genome sequences of the chemolithoautotrophic Oligotropha carboxidovorans strains OM4 and OM5.</title>
        <authorList>
            <person name="Volland S."/>
            <person name="Rachinger M."/>
            <person name="Strittmatter A."/>
            <person name="Daniel R."/>
            <person name="Gottschalk G."/>
            <person name="Meyer O."/>
        </authorList>
    </citation>
    <scope>NUCLEOTIDE SEQUENCE [LARGE SCALE GENOMIC DNA]</scope>
    <source>
        <strain>ATCC 49405 / DSM 1227 / KCTC 32145 / OM5</strain>
    </source>
</reference>
<evidence type="ECO:0000255" key="1">
    <source>
        <dbReference type="HAMAP-Rule" id="MF_00038"/>
    </source>
</evidence>
<dbReference type="EC" id="2.7.8.13" evidence="1"/>
<dbReference type="EMBL" id="CP001196">
    <property type="protein sequence ID" value="ACI92371.1"/>
    <property type="molecule type" value="Genomic_DNA"/>
</dbReference>
<dbReference type="EMBL" id="CP002826">
    <property type="protein sequence ID" value="AEI07424.1"/>
    <property type="molecule type" value="Genomic_DNA"/>
</dbReference>
<dbReference type="RefSeq" id="WP_012562400.1">
    <property type="nucleotide sequence ID" value="NC_015684.1"/>
</dbReference>
<dbReference type="SMR" id="B6JCF5"/>
<dbReference type="STRING" id="504832.OCA5_c27300"/>
<dbReference type="KEGG" id="oca:OCAR_5239"/>
<dbReference type="KEGG" id="ocg:OCA5_c27300"/>
<dbReference type="PATRIC" id="fig|504832.7.peg.2886"/>
<dbReference type="eggNOG" id="COG0472">
    <property type="taxonomic scope" value="Bacteria"/>
</dbReference>
<dbReference type="HOGENOM" id="CLU_023982_0_0_5"/>
<dbReference type="OrthoDB" id="9805475at2"/>
<dbReference type="UniPathway" id="UPA00219"/>
<dbReference type="Proteomes" id="UP000007730">
    <property type="component" value="Chromosome"/>
</dbReference>
<dbReference type="GO" id="GO:0005886">
    <property type="term" value="C:plasma membrane"/>
    <property type="evidence" value="ECO:0007669"/>
    <property type="project" value="UniProtKB-SubCell"/>
</dbReference>
<dbReference type="GO" id="GO:0046872">
    <property type="term" value="F:metal ion binding"/>
    <property type="evidence" value="ECO:0007669"/>
    <property type="project" value="UniProtKB-KW"/>
</dbReference>
<dbReference type="GO" id="GO:0008963">
    <property type="term" value="F:phospho-N-acetylmuramoyl-pentapeptide-transferase activity"/>
    <property type="evidence" value="ECO:0007669"/>
    <property type="project" value="UniProtKB-UniRule"/>
</dbReference>
<dbReference type="GO" id="GO:0051992">
    <property type="term" value="F:UDP-N-acetylmuramoyl-L-alanyl-D-glutamyl-meso-2,6-diaminopimelyl-D-alanyl-D-alanine:undecaprenyl-phosphate transferase activity"/>
    <property type="evidence" value="ECO:0007669"/>
    <property type="project" value="RHEA"/>
</dbReference>
<dbReference type="GO" id="GO:0051301">
    <property type="term" value="P:cell division"/>
    <property type="evidence" value="ECO:0007669"/>
    <property type="project" value="UniProtKB-KW"/>
</dbReference>
<dbReference type="GO" id="GO:0071555">
    <property type="term" value="P:cell wall organization"/>
    <property type="evidence" value="ECO:0007669"/>
    <property type="project" value="UniProtKB-KW"/>
</dbReference>
<dbReference type="GO" id="GO:0009252">
    <property type="term" value="P:peptidoglycan biosynthetic process"/>
    <property type="evidence" value="ECO:0007669"/>
    <property type="project" value="UniProtKB-UniRule"/>
</dbReference>
<dbReference type="GO" id="GO:0008360">
    <property type="term" value="P:regulation of cell shape"/>
    <property type="evidence" value="ECO:0007669"/>
    <property type="project" value="UniProtKB-KW"/>
</dbReference>
<dbReference type="CDD" id="cd06852">
    <property type="entry name" value="GT_MraY"/>
    <property type="match status" value="1"/>
</dbReference>
<dbReference type="HAMAP" id="MF_00038">
    <property type="entry name" value="MraY"/>
    <property type="match status" value="1"/>
</dbReference>
<dbReference type="InterPro" id="IPR000715">
    <property type="entry name" value="Glycosyl_transferase_4"/>
</dbReference>
<dbReference type="InterPro" id="IPR003524">
    <property type="entry name" value="PNAcMuramoyl-5peptid_Trfase"/>
</dbReference>
<dbReference type="InterPro" id="IPR018480">
    <property type="entry name" value="PNAcMuramoyl-5peptid_Trfase_CS"/>
</dbReference>
<dbReference type="NCBIfam" id="TIGR00445">
    <property type="entry name" value="mraY"/>
    <property type="match status" value="1"/>
</dbReference>
<dbReference type="PANTHER" id="PTHR22926">
    <property type="entry name" value="PHOSPHO-N-ACETYLMURAMOYL-PENTAPEPTIDE-TRANSFERASE"/>
    <property type="match status" value="1"/>
</dbReference>
<dbReference type="PANTHER" id="PTHR22926:SF5">
    <property type="entry name" value="PHOSPHO-N-ACETYLMURAMOYL-PENTAPEPTIDE-TRANSFERASE HOMOLOG"/>
    <property type="match status" value="1"/>
</dbReference>
<dbReference type="Pfam" id="PF00953">
    <property type="entry name" value="Glycos_transf_4"/>
    <property type="match status" value="1"/>
</dbReference>
<dbReference type="Pfam" id="PF10555">
    <property type="entry name" value="MraY_sig1"/>
    <property type="match status" value="1"/>
</dbReference>
<dbReference type="PROSITE" id="PS01347">
    <property type="entry name" value="MRAY_1"/>
    <property type="match status" value="1"/>
</dbReference>
<dbReference type="PROSITE" id="PS01348">
    <property type="entry name" value="MRAY_2"/>
    <property type="match status" value="1"/>
</dbReference>
<feature type="chain" id="PRO_1000090650" description="Phospho-N-acetylmuramoyl-pentapeptide-transferase">
    <location>
        <begin position="1"/>
        <end position="361"/>
    </location>
</feature>
<feature type="transmembrane region" description="Helical" evidence="1">
    <location>
        <begin position="27"/>
        <end position="47"/>
    </location>
</feature>
<feature type="transmembrane region" description="Helical" evidence="1">
    <location>
        <begin position="72"/>
        <end position="92"/>
    </location>
</feature>
<feature type="transmembrane region" description="Helical" evidence="1">
    <location>
        <begin position="94"/>
        <end position="114"/>
    </location>
</feature>
<feature type="transmembrane region" description="Helical" evidence="1">
    <location>
        <begin position="133"/>
        <end position="153"/>
    </location>
</feature>
<feature type="transmembrane region" description="Helical" evidence="1">
    <location>
        <begin position="169"/>
        <end position="189"/>
    </location>
</feature>
<feature type="transmembrane region" description="Helical" evidence="1">
    <location>
        <begin position="200"/>
        <end position="220"/>
    </location>
</feature>
<feature type="transmembrane region" description="Helical" evidence="1">
    <location>
        <begin position="240"/>
        <end position="260"/>
    </location>
</feature>
<feature type="transmembrane region" description="Helical" evidence="1">
    <location>
        <begin position="264"/>
        <end position="284"/>
    </location>
</feature>
<feature type="transmembrane region" description="Helical" evidence="1">
    <location>
        <begin position="289"/>
        <end position="309"/>
    </location>
</feature>
<feature type="transmembrane region" description="Helical" evidence="1">
    <location>
        <begin position="338"/>
        <end position="358"/>
    </location>
</feature>
<comment type="function">
    <text evidence="1">Catalyzes the initial step of the lipid cycle reactions in the biosynthesis of the cell wall peptidoglycan: transfers peptidoglycan precursor phospho-MurNAc-pentapeptide from UDP-MurNAc-pentapeptide onto the lipid carrier undecaprenyl phosphate, yielding undecaprenyl-pyrophosphoryl-MurNAc-pentapeptide, known as lipid I.</text>
</comment>
<comment type="catalytic activity">
    <reaction evidence="1">
        <text>UDP-N-acetyl-alpha-D-muramoyl-L-alanyl-gamma-D-glutamyl-meso-2,6-diaminopimeloyl-D-alanyl-D-alanine + di-trans,octa-cis-undecaprenyl phosphate = di-trans,octa-cis-undecaprenyl diphospho-N-acetyl-alpha-D-muramoyl-L-alanyl-D-glutamyl-meso-2,6-diaminopimeloyl-D-alanyl-D-alanine + UMP</text>
        <dbReference type="Rhea" id="RHEA:28386"/>
        <dbReference type="ChEBI" id="CHEBI:57865"/>
        <dbReference type="ChEBI" id="CHEBI:60392"/>
        <dbReference type="ChEBI" id="CHEBI:61386"/>
        <dbReference type="ChEBI" id="CHEBI:61387"/>
        <dbReference type="EC" id="2.7.8.13"/>
    </reaction>
</comment>
<comment type="cofactor">
    <cofactor evidence="1">
        <name>Mg(2+)</name>
        <dbReference type="ChEBI" id="CHEBI:18420"/>
    </cofactor>
</comment>
<comment type="pathway">
    <text evidence="1">Cell wall biogenesis; peptidoglycan biosynthesis.</text>
</comment>
<comment type="subcellular location">
    <subcellularLocation>
        <location evidence="1">Cell inner membrane</location>
        <topology evidence="1">Multi-pass membrane protein</topology>
    </subcellularLocation>
</comment>
<comment type="similarity">
    <text evidence="1">Belongs to the glycosyltransferase 4 family. MraY subfamily.</text>
</comment>
<proteinExistence type="inferred from homology"/>
<accession>B6JCF5</accession>
<accession>F8BV69</accession>
<organism>
    <name type="scientific">Afipia carboxidovorans (strain ATCC 49405 / DSM 1227 / KCTC 32145 / OM5)</name>
    <name type="common">Oligotropha carboxidovorans</name>
    <dbReference type="NCBI Taxonomy" id="504832"/>
    <lineage>
        <taxon>Bacteria</taxon>
        <taxon>Pseudomonadati</taxon>
        <taxon>Pseudomonadota</taxon>
        <taxon>Alphaproteobacteria</taxon>
        <taxon>Hyphomicrobiales</taxon>
        <taxon>Nitrobacteraceae</taxon>
        <taxon>Afipia</taxon>
    </lineage>
</organism>
<protein>
    <recommendedName>
        <fullName evidence="1">Phospho-N-acetylmuramoyl-pentapeptide-transferase</fullName>
        <ecNumber evidence="1">2.7.8.13</ecNumber>
    </recommendedName>
    <alternativeName>
        <fullName evidence="1">UDP-MurNAc-pentapeptide phosphotransferase</fullName>
    </alternativeName>
</protein>
<keyword id="KW-0131">Cell cycle</keyword>
<keyword id="KW-0132">Cell division</keyword>
<keyword id="KW-0997">Cell inner membrane</keyword>
<keyword id="KW-1003">Cell membrane</keyword>
<keyword id="KW-0133">Cell shape</keyword>
<keyword id="KW-0961">Cell wall biogenesis/degradation</keyword>
<keyword id="KW-0460">Magnesium</keyword>
<keyword id="KW-0472">Membrane</keyword>
<keyword id="KW-0479">Metal-binding</keyword>
<keyword id="KW-0573">Peptidoglycan synthesis</keyword>
<keyword id="KW-1185">Reference proteome</keyword>
<keyword id="KW-0808">Transferase</keyword>
<keyword id="KW-0812">Transmembrane</keyword>
<keyword id="KW-1133">Transmembrane helix</keyword>
<gene>
    <name evidence="1" type="primary">mraY</name>
    <name type="ordered locus">OCAR_5239</name>
    <name type="ordered locus">OCA5_c27300</name>
</gene>